<reference key="1">
    <citation type="journal article" date="2004" name="Science">
        <title>The Ashbya gossypii genome as a tool for mapping the ancient Saccharomyces cerevisiae genome.</title>
        <authorList>
            <person name="Dietrich F.S."/>
            <person name="Voegeli S."/>
            <person name="Brachat S."/>
            <person name="Lerch A."/>
            <person name="Gates K."/>
            <person name="Steiner S."/>
            <person name="Mohr C."/>
            <person name="Poehlmann R."/>
            <person name="Luedi P."/>
            <person name="Choi S."/>
            <person name="Wing R.A."/>
            <person name="Flavier A."/>
            <person name="Gaffney T.D."/>
            <person name="Philippsen P."/>
        </authorList>
    </citation>
    <scope>NUCLEOTIDE SEQUENCE [LARGE SCALE GENOMIC DNA]</scope>
    <source>
        <strain>ATCC 10895 / CBS 109.51 / FGSC 9923 / NRRL Y-1056</strain>
    </source>
</reference>
<reference key="2">
    <citation type="journal article" date="2013" name="G3 (Bethesda)">
        <title>Genomes of Ashbya fungi isolated from insects reveal four mating-type loci, numerous translocations, lack of transposons, and distinct gene duplications.</title>
        <authorList>
            <person name="Dietrich F.S."/>
            <person name="Voegeli S."/>
            <person name="Kuo S."/>
            <person name="Philippsen P."/>
        </authorList>
    </citation>
    <scope>GENOME REANNOTATION</scope>
    <source>
        <strain>ATCC 10895 / CBS 109.51 / FGSC 9923 / NRRL Y-1056</strain>
    </source>
</reference>
<feature type="chain" id="PRO_0000304752" description="Mediator of RNA polymerase II transcription subunit 18">
    <location>
        <begin position="1"/>
        <end position="258"/>
    </location>
</feature>
<name>MED18_EREGS</name>
<gene>
    <name type="primary">SRB5</name>
    <name type="synonym">MED18</name>
    <name type="ordered locus">AAR095C</name>
</gene>
<dbReference type="EMBL" id="AE016814">
    <property type="protein sequence ID" value="AAS50460.1"/>
    <property type="status" value="ALT_INIT"/>
    <property type="molecule type" value="Genomic_DNA"/>
</dbReference>
<dbReference type="RefSeq" id="NP_982636.1">
    <property type="nucleotide sequence ID" value="NM_207989.1"/>
</dbReference>
<dbReference type="SMR" id="Q75EI4"/>
<dbReference type="FunCoup" id="Q75EI4">
    <property type="interactions" value="148"/>
</dbReference>
<dbReference type="STRING" id="284811.Q75EI4"/>
<dbReference type="GeneID" id="4618488"/>
<dbReference type="KEGG" id="ago:AGOS_AAR095C"/>
<dbReference type="eggNOG" id="ENOG502RXWG">
    <property type="taxonomic scope" value="Eukaryota"/>
</dbReference>
<dbReference type="InParanoid" id="Q75EI4"/>
<dbReference type="OrthoDB" id="5348092at2759"/>
<dbReference type="Proteomes" id="UP000000591">
    <property type="component" value="Chromosome I"/>
</dbReference>
<dbReference type="GO" id="GO:0070847">
    <property type="term" value="C:core mediator complex"/>
    <property type="evidence" value="ECO:0000318"/>
    <property type="project" value="GO_Central"/>
</dbReference>
<dbReference type="GO" id="GO:0016592">
    <property type="term" value="C:mediator complex"/>
    <property type="evidence" value="ECO:0000318"/>
    <property type="project" value="GO_Central"/>
</dbReference>
<dbReference type="GO" id="GO:0003712">
    <property type="term" value="F:transcription coregulator activity"/>
    <property type="evidence" value="ECO:0000318"/>
    <property type="project" value="GO_Central"/>
</dbReference>
<dbReference type="GO" id="GO:0060261">
    <property type="term" value="P:positive regulation of transcription initiation by RNA polymerase II"/>
    <property type="evidence" value="ECO:0000318"/>
    <property type="project" value="GO_Central"/>
</dbReference>
<dbReference type="Gene3D" id="2.40.320.10">
    <property type="entry name" value="Hypothetical Protein Pfu-838710-001"/>
    <property type="match status" value="1"/>
</dbReference>
<dbReference type="InterPro" id="IPR019095">
    <property type="entry name" value="Mediator_Med18"/>
</dbReference>
<dbReference type="PANTHER" id="PTHR13321:SF2">
    <property type="entry name" value="MEDIATOR OF RNA POLYMERASE II TRANSCRIPTION SUBUNIT 18"/>
    <property type="match status" value="1"/>
</dbReference>
<dbReference type="PANTHER" id="PTHR13321">
    <property type="entry name" value="MEDIATOR OF RNA POLYMERASE II TRANSCRIPTION, SUBUNIT 18"/>
    <property type="match status" value="1"/>
</dbReference>
<dbReference type="Pfam" id="PF09637">
    <property type="entry name" value="Med18"/>
    <property type="match status" value="1"/>
</dbReference>
<organism>
    <name type="scientific">Eremothecium gossypii (strain ATCC 10895 / CBS 109.51 / FGSC 9923 / NRRL Y-1056)</name>
    <name type="common">Yeast</name>
    <name type="synonym">Ashbya gossypii</name>
    <dbReference type="NCBI Taxonomy" id="284811"/>
    <lineage>
        <taxon>Eukaryota</taxon>
        <taxon>Fungi</taxon>
        <taxon>Dikarya</taxon>
        <taxon>Ascomycota</taxon>
        <taxon>Saccharomycotina</taxon>
        <taxon>Saccharomycetes</taxon>
        <taxon>Saccharomycetales</taxon>
        <taxon>Saccharomycetaceae</taxon>
        <taxon>Eremothecium</taxon>
    </lineage>
</organism>
<evidence type="ECO:0000250" key="1"/>
<evidence type="ECO:0000305" key="2"/>
<keyword id="KW-0010">Activator</keyword>
<keyword id="KW-0539">Nucleus</keyword>
<keyword id="KW-1185">Reference proteome</keyword>
<keyword id="KW-0804">Transcription</keyword>
<keyword id="KW-0805">Transcription regulation</keyword>
<proteinExistence type="inferred from homology"/>
<protein>
    <recommendedName>
        <fullName>Mediator of RNA polymerase II transcription subunit 18</fullName>
    </recommendedName>
    <alternativeName>
        <fullName>Mediator complex subunit 18</fullName>
    </alternativeName>
</protein>
<comment type="function">
    <text evidence="1">Component of the Mediator complex, a coactivator involved in the regulated transcription of nearly all RNA polymerase II-dependent genes. Mediator functions as a bridge to convey information from gene-specific regulatory proteins to the basal RNA polymerase II transcription machinery. Mediator is recruited to promoters by direct interactions with regulatory proteins and serves as a scaffold for the assembly of a functional preinitiation complex with RNA polymerase II and the general transcription factors (By similarity).</text>
</comment>
<comment type="subunit">
    <text evidence="1">Component of the Mediator complex.</text>
</comment>
<comment type="subcellular location">
    <subcellularLocation>
        <location evidence="1">Nucleus</location>
    </subcellularLocation>
</comment>
<comment type="similarity">
    <text evidence="2">Belongs to the Mediator complex subunit 18 family.</text>
</comment>
<comment type="sequence caution" evidence="2">
    <conflict type="erroneous initiation">
        <sequence resource="EMBL-CDS" id="AAS50460"/>
    </conflict>
</comment>
<sequence>MVQQLSLYSVIDEGSFDLLIATISALSGRSPVLFANYNHVAHPNPNYAIEKVNAKNQLVEQTRVQLMQEIPFEKLQTEEYSYKLCTKMTGDGPPIETEYLNSLMRSCGDGTRPWSLSLWDIPSAGKDRKVCTQAVVESVVTSTGGAHSSILSFLAELGYVPGYQFVQLGTQFYLENGIVFQISKLWALHGESGKTSAVTKDGFLIKAYLNVPKATDLESINQGTAHLQQLKRELRDYLELSIPDRKSMDSRVGHLNDF</sequence>
<accession>Q75EI4</accession>